<accession>O76720</accession>
<accession>V6CLF4</accession>
<gene>
    <name evidence="6" type="primary">slfl-4</name>
    <name evidence="6" type="ORF">F36H12.2</name>
</gene>
<comment type="function">
    <text evidence="2">Component of the trimeric PUCH (precursor of 21U RNA 5'-end cleavage holoenzyme) complex, that acts as an endoribonuclease processing the 5'-end of precursor Piwi-interacting RNAs (piRNAs) (PubMed:37758951). The PUCH complex consists of tofu-1, tofu-2 and either slfl-3 or slfl-4, where tofu-2 exhibits endoribonuclease activity (PubMed:37758951). PUCH-mediated processing strictly requires a 7-methyl-G cap (m7 G-cap) and an uracil at position three (U3) (PubMed:37758951). PUCH also exhibits a strict bias for piRNA precursors with an A or G at position 1 (PubMed:37758951). Mature piRNA production is enhanced by the interaction of PUCH with the PETISCO complex, which is stabilizing piRNA precursors and allows their processing by PUCH (PubMed:37758951).</text>
</comment>
<comment type="subunit">
    <text evidence="2">Component of the PUCH (precursor of 21U RNA 5'-end cleavage holoenzyme) complex; consisting of tofu-1, tofu-2 and either slfl-3 or slfl-4.</text>
</comment>
<comment type="subcellular location">
    <subcellularLocation>
        <location evidence="1">Membrane</location>
        <topology evidence="1">Single-pass membrane protein</topology>
    </subcellularLocation>
</comment>
<comment type="alternative products">
    <event type="alternative splicing"/>
    <isoform>
        <id>O76720-1</id>
        <name>a</name>
        <sequence type="displayed"/>
    </isoform>
    <isoform>
        <id>O76720-2</id>
        <name>b</name>
        <sequence type="described" ref="VSP_062237"/>
    </isoform>
</comment>
<comment type="disruption phenotype">
    <text evidence="2">Exhibits no defects in piRNA processing (PubMed:37758951). In a slfl-3 mutant background, almost complete loss of mature piRNAs and piRNA precursor accumulation (PubMed:37758951).</text>
</comment>
<comment type="similarity">
    <text evidence="4">Belongs to the Schlafen family.</text>
</comment>
<dbReference type="EMBL" id="BX284604">
    <property type="protein sequence ID" value="CDK13437.1"/>
    <property type="molecule type" value="Genomic_DNA"/>
</dbReference>
<dbReference type="EMBL" id="BX284604">
    <property type="protein sequence ID" value="CCD70660.1"/>
    <property type="molecule type" value="Genomic_DNA"/>
</dbReference>
<dbReference type="PIR" id="T33458">
    <property type="entry name" value="T33458"/>
</dbReference>
<dbReference type="RefSeq" id="NP_001293742.1">
    <molecule id="O76720-2"/>
    <property type="nucleotide sequence ID" value="NM_001306813.4"/>
</dbReference>
<dbReference type="RefSeq" id="NP_001367823.1">
    <molecule id="O76720-1"/>
    <property type="nucleotide sequence ID" value="NM_001380220.2"/>
</dbReference>
<dbReference type="RefSeq" id="NP_500768.2">
    <property type="nucleotide sequence ID" value="NM_068367.4"/>
</dbReference>
<dbReference type="ComplexPortal" id="CPX-8569">
    <property type="entry name" value="PUCH ribonuclease complex, slfl-4 variant"/>
</dbReference>
<dbReference type="PaxDb" id="6239-F36H12.2"/>
<dbReference type="EnsemblMetazoa" id="F36H12.2a.1">
    <molecule id="O76720-1"/>
    <property type="protein sequence ID" value="F36H12.2a.1"/>
    <property type="gene ID" value="WBGene00018118"/>
</dbReference>
<dbReference type="EnsemblMetazoa" id="F36H12.2b.1">
    <molecule id="O76720-2"/>
    <property type="protein sequence ID" value="F36H12.2b.1"/>
    <property type="gene ID" value="WBGene00018118"/>
</dbReference>
<dbReference type="GeneID" id="185394"/>
<dbReference type="KEGG" id="cel:CELE_F36H12.2"/>
<dbReference type="UCSC" id="F36H12.2">
    <molecule id="O76720-1"/>
    <property type="organism name" value="c. elegans"/>
</dbReference>
<dbReference type="AGR" id="WB:WBGene00018118"/>
<dbReference type="CTD" id="185394"/>
<dbReference type="WormBase" id="F36H12.2a">
    <molecule id="O76720-1"/>
    <property type="protein sequence ID" value="CE34854"/>
    <property type="gene ID" value="WBGene00018118"/>
    <property type="gene designation" value="slfl-4"/>
</dbReference>
<dbReference type="WormBase" id="F36H12.2b">
    <molecule id="O76720-2"/>
    <property type="protein sequence ID" value="CE49225"/>
    <property type="gene ID" value="WBGene00018118"/>
    <property type="gene designation" value="slfl-4"/>
</dbReference>
<dbReference type="eggNOG" id="ENOG502TH52">
    <property type="taxonomic scope" value="Eukaryota"/>
</dbReference>
<dbReference type="GeneTree" id="ENSGT00970000196292"/>
<dbReference type="HOGENOM" id="CLU_673072_0_0_1"/>
<dbReference type="InParanoid" id="V6CLF4"/>
<dbReference type="OMA" id="QMPKYFE"/>
<dbReference type="OrthoDB" id="5799141at2759"/>
<dbReference type="Proteomes" id="UP000001940">
    <property type="component" value="Chromosome IV"/>
</dbReference>
<dbReference type="Bgee" id="WBGene00018118">
    <property type="expression patterns" value="Expressed in germ line (C elegans) and 3 other cell types or tissues"/>
</dbReference>
<dbReference type="ExpressionAtlas" id="O76720">
    <property type="expression patterns" value="baseline and differential"/>
</dbReference>
<dbReference type="GO" id="GO:1902555">
    <property type="term" value="C:endoribonuclease complex"/>
    <property type="evidence" value="ECO:0000314"/>
    <property type="project" value="UniProtKB"/>
</dbReference>
<dbReference type="GO" id="GO:0016020">
    <property type="term" value="C:membrane"/>
    <property type="evidence" value="ECO:0007669"/>
    <property type="project" value="UniProtKB-SubCell"/>
</dbReference>
<dbReference type="GO" id="GO:0140990">
    <property type="term" value="P:primary piRNA processing"/>
    <property type="evidence" value="ECO:0000314"/>
    <property type="project" value="UniProtKB"/>
</dbReference>
<reference evidence="5" key="1">
    <citation type="journal article" date="1998" name="Science">
        <title>Genome sequence of the nematode C. elegans: a platform for investigating biology.</title>
        <authorList>
            <consortium name="The C. elegans sequencing consortium"/>
        </authorList>
    </citation>
    <scope>NUCLEOTIDE SEQUENCE [LARGE SCALE GENOMIC DNA]</scope>
    <source>
        <strain evidence="5">Bristol N2</strain>
    </source>
</reference>
<reference evidence="4" key="2">
    <citation type="journal article" date="2023" name="Nature">
        <title>piRNA processing by a trimeric Schlafen-domain nuclease.</title>
        <authorList>
            <person name="Podvalnaya N."/>
            <person name="Bronkhorst A.W."/>
            <person name="Lichtenberger R."/>
            <person name="Hellmann S."/>
            <person name="Nischwitz E."/>
            <person name="Falk T."/>
            <person name="Karaulanov E."/>
            <person name="Butter F."/>
            <person name="Falk S."/>
            <person name="Ketting R.F."/>
        </authorList>
    </citation>
    <scope>FUNCTION</scope>
    <scope>IDENTIFICATION IN THE PUCH COMPLEX</scope>
    <scope>INTERACTION WITH TOFU-2</scope>
    <scope>INTERACTION WITH PETISCO COMPLEX</scope>
    <scope>DISRUPTION PHENOTYPE</scope>
    <scope>IDENTIFICATION BY MASS SPECTROMETRY</scope>
</reference>
<proteinExistence type="evidence at protein level"/>
<sequence length="352" mass="40175">MIDKIVFEEDEEYDLTQDSFRYGRVTTGASYNLVTGKIPETVLEQVKAKDDENDDVEFEMDHLEDKEAVQKTKTFDELYESQMPKYFEYQSNFSEVNGIWTLLFDQNHYENMSTFELQAAICAALNSKHYMMICVGIDAFNAVTGVEMSAKDRVVFRMALTRAVAGEFQPPLVKVAPKQLTGVSPMKRDISEVTSSIDVLFIPVIGVTDEVENNRFLIVVRVKEISDKVYQISSGRIYNELEGRVVEMSDMNEAFHKLIVEQSISDIQTRRGSMFMLEPEPFLEDSPVIFTGSKEILRENHEIPNILKENSTERSLSQSLLNLLDIQNIGWIFFGTALSCCIYNNAIKPLVK</sequence>
<keyword id="KW-0025">Alternative splicing</keyword>
<keyword id="KW-0472">Membrane</keyword>
<keyword id="KW-1185">Reference proteome</keyword>
<keyword id="KW-0812">Transmembrane</keyword>
<keyword id="KW-1133">Transmembrane helix</keyword>
<feature type="chain" id="PRO_0000459693" description="Schlafen-like protein 4">
    <location>
        <begin position="1"/>
        <end position="352"/>
    </location>
</feature>
<feature type="transmembrane region" description="Helical" evidence="1">
    <location>
        <begin position="326"/>
        <end position="343"/>
    </location>
</feature>
<feature type="region of interest" description="SLFN-like fold" evidence="3">
    <location>
        <begin position="87"/>
        <end position="235"/>
    </location>
</feature>
<feature type="splice variant" id="VSP_062237" description="In isoform b.">
    <original>M</original>
    <variation>MDSVDFSPTMQSRFSTGFMSFEDNPEDVRTIEM</variation>
    <location>
        <position position="1"/>
    </location>
</feature>
<protein>
    <recommendedName>
        <fullName evidence="3">Schlafen-like protein 4</fullName>
        <shortName evidence="3">SLFN-like 4</shortName>
    </recommendedName>
    <alternativeName>
        <fullName evidence="4">PUCH complex member slfl-4</fullName>
    </alternativeName>
</protein>
<name>SLFL4_CAEEL</name>
<organism evidence="5">
    <name type="scientific">Caenorhabditis elegans</name>
    <dbReference type="NCBI Taxonomy" id="6239"/>
    <lineage>
        <taxon>Eukaryota</taxon>
        <taxon>Metazoa</taxon>
        <taxon>Ecdysozoa</taxon>
        <taxon>Nematoda</taxon>
        <taxon>Chromadorea</taxon>
        <taxon>Rhabditida</taxon>
        <taxon>Rhabditina</taxon>
        <taxon>Rhabditomorpha</taxon>
        <taxon>Rhabditoidea</taxon>
        <taxon>Rhabditidae</taxon>
        <taxon>Peloderinae</taxon>
        <taxon>Caenorhabditis</taxon>
    </lineage>
</organism>
<evidence type="ECO:0000255" key="1"/>
<evidence type="ECO:0000269" key="2">
    <source>
    </source>
</evidence>
<evidence type="ECO:0000303" key="3">
    <source>
    </source>
</evidence>
<evidence type="ECO:0000305" key="4"/>
<evidence type="ECO:0000312" key="5">
    <source>
        <dbReference type="Proteomes" id="UP000001940"/>
    </source>
</evidence>
<evidence type="ECO:0000312" key="6">
    <source>
        <dbReference type="WormBase" id="F36H12.2a"/>
    </source>
</evidence>